<keyword id="KW-0004">4Fe-4S</keyword>
<keyword id="KW-0148">Chlorophyll</keyword>
<keyword id="KW-0157">Chromophore</keyword>
<keyword id="KW-0903">Direct protein sequencing</keyword>
<keyword id="KW-0249">Electron transport</keyword>
<keyword id="KW-0408">Iron</keyword>
<keyword id="KW-0411">Iron-sulfur</keyword>
<keyword id="KW-0460">Magnesium</keyword>
<keyword id="KW-0472">Membrane</keyword>
<keyword id="KW-0479">Metal-binding</keyword>
<keyword id="KW-0560">Oxidoreductase</keyword>
<keyword id="KW-0602">Photosynthesis</keyword>
<keyword id="KW-0603">Photosystem I</keyword>
<keyword id="KW-0793">Thylakoid</keyword>
<keyword id="KW-0812">Transmembrane</keyword>
<keyword id="KW-1133">Transmembrane helix</keyword>
<keyword id="KW-0813">Transport</keyword>
<comment type="function">
    <text>PsaA and PsaB bind P700, the primary electron donor of photosystem I (PSI), as well as the electron acceptors A0, A1 and FX. PSI is a plastocyanin/cytochrome c6-ferredoxin oxidoreductase, converting photonic excitation into a charge separation, which transfers an electron from the donor P700 chlorophyll pair to the spectroscopically characterized acceptors A0, A1, FX, FA and FB in turn. Oxidized P700 is reduced on the lumenal side of the thylakoid membrane by plastocyanin or cytochrome c6.</text>
</comment>
<comment type="catalytic activity">
    <reaction evidence="1">
        <text>reduced [plastocyanin] + hnu + oxidized [2Fe-2S]-[ferredoxin] = oxidized [plastocyanin] + reduced [2Fe-2S]-[ferredoxin]</text>
        <dbReference type="Rhea" id="RHEA:30407"/>
        <dbReference type="Rhea" id="RHEA-COMP:10000"/>
        <dbReference type="Rhea" id="RHEA-COMP:10001"/>
        <dbReference type="Rhea" id="RHEA-COMP:10039"/>
        <dbReference type="Rhea" id="RHEA-COMP:10040"/>
        <dbReference type="ChEBI" id="CHEBI:29036"/>
        <dbReference type="ChEBI" id="CHEBI:30212"/>
        <dbReference type="ChEBI" id="CHEBI:33737"/>
        <dbReference type="ChEBI" id="CHEBI:33738"/>
        <dbReference type="ChEBI" id="CHEBI:49552"/>
        <dbReference type="EC" id="1.97.1.12"/>
    </reaction>
</comment>
<comment type="cofactor">
    <text evidence="1">PSI electron transfer chain: 5 chlorophyll a, 1 chlorophyll a', 2 phylloquinones and 3 4Fe-4S clusters. PSI core antenna: 90 chlorophyll a, 22 carotenoids, 3 phospholipids and 1 galactolipid. P700 is a chlorophyll a/chlorophyll a' dimer, A0 is one or more chlorophyll a, A1 is one or both phylloquinones and FX is a shared 4Fe-4S iron-sulfur center.</text>
</comment>
<comment type="subunit">
    <text evidence="1">The PsaA/B heterodimer binds the P700 chlorophyll special pair and subsequent electron acceptors. PSI consists of a core antenna complex that captures photons, and an electron transfer chain that converts photonic excitation into a charge separation. The cyanobacterial PSI reaction center is composed of one copy each of PsaA,B,C,D,E,F,I,J,K,L,M and X, and forms trimeric complexes.</text>
</comment>
<comment type="subcellular location">
    <subcellularLocation>
        <location>Cellular thylakoid membrane</location>
        <topology>Multi-pass membrane protein</topology>
    </subcellularLocation>
</comment>
<comment type="similarity">
    <text evidence="1">Belongs to the PsaA/PsaB family.</text>
</comment>
<proteinExistence type="evidence at protein level"/>
<gene>
    <name evidence="1" type="primary">psaB1</name>
    <name type="ordered locus">Ava_2406</name>
</gene>
<organism>
    <name type="scientific">Trichormus variabilis (strain ATCC 29413 / PCC 7937)</name>
    <name type="common">Anabaena variabilis</name>
    <dbReference type="NCBI Taxonomy" id="240292"/>
    <lineage>
        <taxon>Bacteria</taxon>
        <taxon>Bacillati</taxon>
        <taxon>Cyanobacteriota</taxon>
        <taxon>Cyanophyceae</taxon>
        <taxon>Nostocales</taxon>
        <taxon>Nostocaceae</taxon>
        <taxon>Trichormus</taxon>
    </lineage>
</organism>
<dbReference type="EC" id="1.97.1.12" evidence="1"/>
<dbReference type="EMBL" id="L26326">
    <property type="protein sequence ID" value="AAA18489.1"/>
    <property type="molecule type" value="Unassigned_DNA"/>
</dbReference>
<dbReference type="EMBL" id="CP000117">
    <property type="protein sequence ID" value="ABA22023.1"/>
    <property type="molecule type" value="Genomic_DNA"/>
</dbReference>
<dbReference type="PIR" id="I39616">
    <property type="entry name" value="I39616"/>
</dbReference>
<dbReference type="SMR" id="P31088"/>
<dbReference type="STRING" id="240292.Ava_2406"/>
<dbReference type="KEGG" id="ava:Ava_2406"/>
<dbReference type="eggNOG" id="COG2885">
    <property type="taxonomic scope" value="Bacteria"/>
</dbReference>
<dbReference type="HOGENOM" id="CLU_016126_1_0_3"/>
<dbReference type="Proteomes" id="UP000002533">
    <property type="component" value="Chromosome"/>
</dbReference>
<dbReference type="GO" id="GO:0009522">
    <property type="term" value="C:photosystem I"/>
    <property type="evidence" value="ECO:0007669"/>
    <property type="project" value="UniProtKB-KW"/>
</dbReference>
<dbReference type="GO" id="GO:0031676">
    <property type="term" value="C:plasma membrane-derived thylakoid membrane"/>
    <property type="evidence" value="ECO:0007669"/>
    <property type="project" value="UniProtKB-SubCell"/>
</dbReference>
<dbReference type="GO" id="GO:0051539">
    <property type="term" value="F:4 iron, 4 sulfur cluster binding"/>
    <property type="evidence" value="ECO:0007669"/>
    <property type="project" value="UniProtKB-KW"/>
</dbReference>
<dbReference type="GO" id="GO:0016168">
    <property type="term" value="F:chlorophyll binding"/>
    <property type="evidence" value="ECO:0007669"/>
    <property type="project" value="UniProtKB-KW"/>
</dbReference>
<dbReference type="GO" id="GO:0009055">
    <property type="term" value="F:electron transfer activity"/>
    <property type="evidence" value="ECO:0007669"/>
    <property type="project" value="UniProtKB-UniRule"/>
</dbReference>
<dbReference type="GO" id="GO:0000287">
    <property type="term" value="F:magnesium ion binding"/>
    <property type="evidence" value="ECO:0007669"/>
    <property type="project" value="UniProtKB-UniRule"/>
</dbReference>
<dbReference type="GO" id="GO:0016491">
    <property type="term" value="F:oxidoreductase activity"/>
    <property type="evidence" value="ECO:0007669"/>
    <property type="project" value="UniProtKB-KW"/>
</dbReference>
<dbReference type="GO" id="GO:0015979">
    <property type="term" value="P:photosynthesis"/>
    <property type="evidence" value="ECO:0007669"/>
    <property type="project" value="UniProtKB-UniRule"/>
</dbReference>
<dbReference type="FunFam" id="1.20.1130.10:FF:000001">
    <property type="entry name" value="Photosystem I P700 chlorophyll a apoprotein A2"/>
    <property type="match status" value="1"/>
</dbReference>
<dbReference type="Gene3D" id="1.20.1130.10">
    <property type="entry name" value="Photosystem I PsaA/PsaB"/>
    <property type="match status" value="1"/>
</dbReference>
<dbReference type="HAMAP" id="MF_00482">
    <property type="entry name" value="PSI_PsaB"/>
    <property type="match status" value="1"/>
</dbReference>
<dbReference type="InterPro" id="IPR001280">
    <property type="entry name" value="PSI_PsaA/B"/>
</dbReference>
<dbReference type="InterPro" id="IPR020586">
    <property type="entry name" value="PSI_PsaA/B_CS"/>
</dbReference>
<dbReference type="InterPro" id="IPR036408">
    <property type="entry name" value="PSI_PsaA/B_sf"/>
</dbReference>
<dbReference type="InterPro" id="IPR006244">
    <property type="entry name" value="PSI_PsaB"/>
</dbReference>
<dbReference type="NCBIfam" id="TIGR01336">
    <property type="entry name" value="psaB"/>
    <property type="match status" value="1"/>
</dbReference>
<dbReference type="PANTHER" id="PTHR30128">
    <property type="entry name" value="OUTER MEMBRANE PROTEIN, OMPA-RELATED"/>
    <property type="match status" value="1"/>
</dbReference>
<dbReference type="PANTHER" id="PTHR30128:SF19">
    <property type="entry name" value="PHOTOSYSTEM I P700 CHLOROPHYLL A APOPROTEIN A1-RELATED"/>
    <property type="match status" value="1"/>
</dbReference>
<dbReference type="Pfam" id="PF00223">
    <property type="entry name" value="PsaA_PsaB"/>
    <property type="match status" value="1"/>
</dbReference>
<dbReference type="PIRSF" id="PIRSF002905">
    <property type="entry name" value="PSI_A"/>
    <property type="match status" value="1"/>
</dbReference>
<dbReference type="PRINTS" id="PR00257">
    <property type="entry name" value="PHOTSYSPSAAB"/>
</dbReference>
<dbReference type="SUPFAM" id="SSF81558">
    <property type="entry name" value="Photosystem I subunits PsaA/PsaB"/>
    <property type="match status" value="1"/>
</dbReference>
<dbReference type="PROSITE" id="PS00419">
    <property type="entry name" value="PHOTOSYSTEM_I_PSAAB"/>
    <property type="match status" value="1"/>
</dbReference>
<accession>P31088</accession>
<accession>Q3MAG3</accession>
<feature type="initiator methionine" description="Removed" evidence="2">
    <location>
        <position position="1"/>
    </location>
</feature>
<feature type="chain" id="PRO_0000088643" description="Photosystem I P700 chlorophyll a apoprotein A2 1">
    <location>
        <begin position="2"/>
        <end position="741"/>
    </location>
</feature>
<feature type="transmembrane region" description="Helical; Name=I" evidence="1">
    <location>
        <begin position="46"/>
        <end position="69"/>
    </location>
</feature>
<feature type="transmembrane region" description="Helical; Name=II" evidence="1">
    <location>
        <begin position="135"/>
        <end position="158"/>
    </location>
</feature>
<feature type="transmembrane region" description="Helical; Name=III" evidence="1">
    <location>
        <begin position="175"/>
        <end position="199"/>
    </location>
</feature>
<feature type="transmembrane region" description="Helical; Name=IV" evidence="1">
    <location>
        <begin position="273"/>
        <end position="291"/>
    </location>
</feature>
<feature type="transmembrane region" description="Helical; Name=V" evidence="1">
    <location>
        <begin position="334"/>
        <end position="357"/>
    </location>
</feature>
<feature type="transmembrane region" description="Helical; Name=VI" evidence="1">
    <location>
        <begin position="373"/>
        <end position="399"/>
    </location>
</feature>
<feature type="transmembrane region" description="Helical; Name=VII" evidence="1">
    <location>
        <begin position="421"/>
        <end position="443"/>
    </location>
</feature>
<feature type="transmembrane region" description="Helical; Name=VIII" evidence="1">
    <location>
        <begin position="524"/>
        <end position="542"/>
    </location>
</feature>
<feature type="transmembrane region" description="Helical; Name=IX" evidence="1">
    <location>
        <begin position="582"/>
        <end position="603"/>
    </location>
</feature>
<feature type="transmembrane region" description="Helical; Name=X" evidence="1">
    <location>
        <begin position="650"/>
        <end position="672"/>
    </location>
</feature>
<feature type="transmembrane region" description="Helical; Name=XI" evidence="1">
    <location>
        <begin position="714"/>
        <end position="734"/>
    </location>
</feature>
<feature type="binding site" evidence="1">
    <location>
        <position position="566"/>
    </location>
    <ligand>
        <name>[4Fe-4S] cluster</name>
        <dbReference type="ChEBI" id="CHEBI:49883"/>
        <note>ligand shared between dimeric partners</note>
    </ligand>
</feature>
<feature type="binding site" evidence="1">
    <location>
        <position position="575"/>
    </location>
    <ligand>
        <name>[4Fe-4S] cluster</name>
        <dbReference type="ChEBI" id="CHEBI:49883"/>
        <note>ligand shared between dimeric partners</note>
    </ligand>
</feature>
<feature type="binding site" description="axial binding residue" evidence="1">
    <location>
        <position position="661"/>
    </location>
    <ligand>
        <name>chlorophyll a</name>
        <dbReference type="ChEBI" id="CHEBI:58416"/>
        <label>B1</label>
    </ligand>
    <ligandPart>
        <name>Mg</name>
        <dbReference type="ChEBI" id="CHEBI:25107"/>
    </ligandPart>
</feature>
<feature type="binding site" description="axial binding residue" evidence="1">
    <location>
        <position position="669"/>
    </location>
    <ligand>
        <name>chlorophyll a</name>
        <dbReference type="ChEBI" id="CHEBI:58416"/>
        <label>B3</label>
    </ligand>
    <ligandPart>
        <name>Mg</name>
        <dbReference type="ChEBI" id="CHEBI:25107"/>
    </ligandPart>
</feature>
<feature type="binding site" evidence="1">
    <location>
        <position position="677"/>
    </location>
    <ligand>
        <name>chlorophyll a</name>
        <dbReference type="ChEBI" id="CHEBI:58416"/>
        <label>B3</label>
    </ligand>
</feature>
<feature type="binding site" evidence="1">
    <location>
        <position position="678"/>
    </location>
    <ligand>
        <name>phylloquinone</name>
        <dbReference type="ChEBI" id="CHEBI:18067"/>
        <label>B</label>
    </ligand>
</feature>
<reference key="1">
    <citation type="journal article" date="1994" name="Biochim. Biophys. Acta">
        <title>Nucleotide sequences of the psaA and the psaB genes encoding the reaction center proteins of photosystem I in Anabaena variabilis ATCC 29413.</title>
        <authorList>
            <person name="Nyhus K.J."/>
            <person name="Sonoike K."/>
            <person name="Pakrasi H.B."/>
        </authorList>
    </citation>
    <scope>NUCLEOTIDE SEQUENCE [GENOMIC DNA]</scope>
</reference>
<reference key="2">
    <citation type="journal article" date="2014" name="Stand. Genomic Sci.">
        <title>Complete genome sequence of Anabaena variabilis ATCC 29413.</title>
        <authorList>
            <person name="Thiel T."/>
            <person name="Pratte B.S."/>
            <person name="Zhong J."/>
            <person name="Goodwin L."/>
            <person name="Copeland A."/>
            <person name="Lucas S."/>
            <person name="Han C."/>
            <person name="Pitluck S."/>
            <person name="Land M.L."/>
            <person name="Kyrpides N.C."/>
            <person name="Woyke T."/>
        </authorList>
    </citation>
    <scope>NUCLEOTIDE SEQUENCE [LARGE SCALE GENOMIC DNA]</scope>
    <source>
        <strain>ATCC 29413 / PCC 7937</strain>
    </source>
</reference>
<reference key="3">
    <citation type="journal article" date="1992" name="J. Biol. Chem.">
        <title>Purification and characterization of the photosystem I complex from the filamentous cyanobacterium Anabaena variabilis ATCC 29413.</title>
        <authorList>
            <person name="Nyhus K.J."/>
            <person name="Ikeuchi M."/>
            <person name="Inoue Y."/>
            <person name="Whitmarsh J."/>
            <person name="Pakrasi H.B."/>
        </authorList>
    </citation>
    <scope>PROTEIN SEQUENCE OF 2-18</scope>
</reference>
<protein>
    <recommendedName>
        <fullName evidence="1">Photosystem I P700 chlorophyll a apoprotein A2 1</fullName>
        <ecNumber evidence="1">1.97.1.12</ecNumber>
    </recommendedName>
    <alternativeName>
        <fullName evidence="1">PsaB</fullName>
    </alternativeName>
</protein>
<evidence type="ECO:0000255" key="1">
    <source>
        <dbReference type="HAMAP-Rule" id="MF_00482"/>
    </source>
</evidence>
<evidence type="ECO:0000269" key="2">
    <source>
    </source>
</evidence>
<name>PSAB1_TRIV2</name>
<sequence>MATKFPKFSQDLAQDPTTRRIWYAMAMGNDFESHDGMTEENLYQKIFATHFGHLAIIFLWASSLLFHVAWQGNFEQWIKDPLHVRPIAHAIWDPHFGKPAIEAFTQAGANGPVNIAYSGVYHWWYTIGMRTNTELYTGSVFLLLFASLFLFAGWLHLQPKFRPSLAWFKSAESRLNHHLAGLFGVSSLAWAGHLIHVAIPESRGQHVGWDNFLTTAPHPAGLQPFFTGNWGVYAQNPDTAGHIFSTSQGSGTAILTFLGGFHPQTESLWLTDIAHHHLAIAVLFIVAGHMYRTNFGIGHSIKEMMNAKTFFGKPVEGPFNMPHQGIYDTYNNSLHFQLGWHLACLGVVTSWVAQHMYSLPSYAFIAKDYTTQAALYTHHQYIAIFLMVGAFAHGAIFLVRDYDPEQNKGNVLERVLQHKEAIISHLSWVSLFLGFHTLGLYVHNDVVVAFGTPEKQILIEPVFAQFIQAAHGKVLYGLDTLLSNPDSVAYTAYPNYANVWLPGWLDAINSGTNSLFLTIGPGDFLVHHAIALGLHTTTLILVKGALDARGSKLMPDKKDFGYAFPCDGPGRGGTCDISAWDSFYLSLFWALNTVGWVTFYWHWKHLGIWQGNVAQFNENSTYLMGWFRDYLWANSAQLINGYNPYGVNNLSVWAWMFLFGHLVWATGFMFLISWRGYWQELIETLVWAHERTPIANLIRWKDKPVALSIVQARVVGLAHFTVGYVLTYAAFLIASTAGKFG</sequence>